<comment type="similarity">
    <text evidence="1">Belongs to the bacterial ribosomal protein bL34 family.</text>
</comment>
<proteinExistence type="inferred from homology"/>
<dbReference type="EMBL" id="CP001657">
    <property type="protein sequence ID" value="ACT15309.1"/>
    <property type="molecule type" value="Genomic_DNA"/>
</dbReference>
<dbReference type="RefSeq" id="WP_015842368.1">
    <property type="nucleotide sequence ID" value="NC_012917.1"/>
</dbReference>
<dbReference type="SMR" id="C6DKA0"/>
<dbReference type="STRING" id="561230.PC1_4295"/>
<dbReference type="GeneID" id="97764865"/>
<dbReference type="KEGG" id="pct:PC1_4295"/>
<dbReference type="eggNOG" id="COG0230">
    <property type="taxonomic scope" value="Bacteria"/>
</dbReference>
<dbReference type="HOGENOM" id="CLU_129938_2_1_6"/>
<dbReference type="OrthoDB" id="9804164at2"/>
<dbReference type="Proteomes" id="UP000002736">
    <property type="component" value="Chromosome"/>
</dbReference>
<dbReference type="GO" id="GO:1990904">
    <property type="term" value="C:ribonucleoprotein complex"/>
    <property type="evidence" value="ECO:0007669"/>
    <property type="project" value="UniProtKB-KW"/>
</dbReference>
<dbReference type="GO" id="GO:0005840">
    <property type="term" value="C:ribosome"/>
    <property type="evidence" value="ECO:0007669"/>
    <property type="project" value="UniProtKB-KW"/>
</dbReference>
<dbReference type="GO" id="GO:0003735">
    <property type="term" value="F:structural constituent of ribosome"/>
    <property type="evidence" value="ECO:0007669"/>
    <property type="project" value="InterPro"/>
</dbReference>
<dbReference type="GO" id="GO:0006412">
    <property type="term" value="P:translation"/>
    <property type="evidence" value="ECO:0007669"/>
    <property type="project" value="UniProtKB-UniRule"/>
</dbReference>
<dbReference type="FunFam" id="1.10.287.3980:FF:000001">
    <property type="entry name" value="Mitochondrial ribosomal protein L34"/>
    <property type="match status" value="1"/>
</dbReference>
<dbReference type="Gene3D" id="1.10.287.3980">
    <property type="match status" value="1"/>
</dbReference>
<dbReference type="HAMAP" id="MF_00391">
    <property type="entry name" value="Ribosomal_bL34"/>
    <property type="match status" value="1"/>
</dbReference>
<dbReference type="InterPro" id="IPR000271">
    <property type="entry name" value="Ribosomal_bL34"/>
</dbReference>
<dbReference type="InterPro" id="IPR020939">
    <property type="entry name" value="Ribosomal_bL34_CS"/>
</dbReference>
<dbReference type="NCBIfam" id="TIGR01030">
    <property type="entry name" value="rpmH_bact"/>
    <property type="match status" value="1"/>
</dbReference>
<dbReference type="PANTHER" id="PTHR14503:SF4">
    <property type="entry name" value="LARGE RIBOSOMAL SUBUNIT PROTEIN BL34M"/>
    <property type="match status" value="1"/>
</dbReference>
<dbReference type="PANTHER" id="PTHR14503">
    <property type="entry name" value="MITOCHONDRIAL RIBOSOMAL PROTEIN 34 FAMILY MEMBER"/>
    <property type="match status" value="1"/>
</dbReference>
<dbReference type="Pfam" id="PF00468">
    <property type="entry name" value="Ribosomal_L34"/>
    <property type="match status" value="1"/>
</dbReference>
<dbReference type="PROSITE" id="PS00784">
    <property type="entry name" value="RIBOSOMAL_L34"/>
    <property type="match status" value="1"/>
</dbReference>
<reference key="1">
    <citation type="submission" date="2009-07" db="EMBL/GenBank/DDBJ databases">
        <title>Complete sequence of Pectobacterium carotovorum subsp. carotovorum PC1.</title>
        <authorList>
            <consortium name="US DOE Joint Genome Institute"/>
            <person name="Lucas S."/>
            <person name="Copeland A."/>
            <person name="Lapidus A."/>
            <person name="Glavina del Rio T."/>
            <person name="Tice H."/>
            <person name="Bruce D."/>
            <person name="Goodwin L."/>
            <person name="Pitluck S."/>
            <person name="Munk A.C."/>
            <person name="Brettin T."/>
            <person name="Detter J.C."/>
            <person name="Han C."/>
            <person name="Tapia R."/>
            <person name="Larimer F."/>
            <person name="Land M."/>
            <person name="Hauser L."/>
            <person name="Kyrpides N."/>
            <person name="Mikhailova N."/>
            <person name="Balakrishnan V."/>
            <person name="Glasner J."/>
            <person name="Perna N.T."/>
        </authorList>
    </citation>
    <scope>NUCLEOTIDE SEQUENCE [LARGE SCALE GENOMIC DNA]</scope>
    <source>
        <strain>PC1</strain>
    </source>
</reference>
<evidence type="ECO:0000255" key="1">
    <source>
        <dbReference type="HAMAP-Rule" id="MF_00391"/>
    </source>
</evidence>
<evidence type="ECO:0000305" key="2"/>
<name>RL34_PECCP</name>
<feature type="chain" id="PRO_1000205834" description="Large ribosomal subunit protein bL34">
    <location>
        <begin position="1"/>
        <end position="46"/>
    </location>
</feature>
<keyword id="KW-0687">Ribonucleoprotein</keyword>
<keyword id="KW-0689">Ribosomal protein</keyword>
<protein>
    <recommendedName>
        <fullName evidence="1">Large ribosomal subunit protein bL34</fullName>
    </recommendedName>
    <alternativeName>
        <fullName evidence="2">50S ribosomal protein L34</fullName>
    </alternativeName>
</protein>
<accession>C6DKA0</accession>
<gene>
    <name evidence="1" type="primary">rpmH</name>
    <name type="ordered locus">PC1_4295</name>
</gene>
<sequence length="46" mass="5366">MKRTFQPSVLKRNRSHGFRARMATKNGRQVLARRRAKGRARLSVSK</sequence>
<organism>
    <name type="scientific">Pectobacterium carotovorum subsp. carotovorum (strain PC1)</name>
    <dbReference type="NCBI Taxonomy" id="561230"/>
    <lineage>
        <taxon>Bacteria</taxon>
        <taxon>Pseudomonadati</taxon>
        <taxon>Pseudomonadota</taxon>
        <taxon>Gammaproteobacteria</taxon>
        <taxon>Enterobacterales</taxon>
        <taxon>Pectobacteriaceae</taxon>
        <taxon>Pectobacterium</taxon>
    </lineage>
</organism>